<sequence>MKRIFLFIVTNLAILVMLSITLRLLGVDRILDAEGSGLNFNALLVLSAVIGFGGSLISLAMSKWSAKHMTGATVIEIPSNSTEGWLVETVRRQAKAAGVGMPEVAIYDSPDINAFATGMNRNNALVAVSSGLLQKMSRDEAEAVLAHEVSHIANGDMVTLALIQGVVNTFVIFLSRIIGHVIDRAVFRTEEGHGPAYFVTSLVAQLVLGILATIIVMWFSRQREFRADAGSAQLSGRNKMVAALRRLQQEYEPSHLPDKIAAFGISGQKSQIGRLFMSHPPLEERIQALQSA</sequence>
<gene>
    <name evidence="1" type="primary">htpX</name>
    <name type="ordered locus">Neut_1535</name>
</gene>
<name>HTPX_NITEC</name>
<protein>
    <recommendedName>
        <fullName evidence="1">Protease HtpX homolog</fullName>
        <ecNumber evidence="1">3.4.24.-</ecNumber>
    </recommendedName>
</protein>
<comment type="cofactor">
    <cofactor evidence="1">
        <name>Zn(2+)</name>
        <dbReference type="ChEBI" id="CHEBI:29105"/>
    </cofactor>
    <text evidence="1">Binds 1 zinc ion per subunit.</text>
</comment>
<comment type="subcellular location">
    <subcellularLocation>
        <location evidence="1">Cell inner membrane</location>
        <topology evidence="1">Multi-pass membrane protein</topology>
    </subcellularLocation>
</comment>
<comment type="similarity">
    <text evidence="1">Belongs to the peptidase M48B family.</text>
</comment>
<accession>Q0AFV3</accession>
<reference key="1">
    <citation type="journal article" date="2007" name="Environ. Microbiol.">
        <title>Whole-genome analysis of the ammonia-oxidizing bacterium, Nitrosomonas eutropha C91: implications for niche adaptation.</title>
        <authorList>
            <person name="Stein L.Y."/>
            <person name="Arp D.J."/>
            <person name="Berube P.M."/>
            <person name="Chain P.S."/>
            <person name="Hauser L."/>
            <person name="Jetten M.S."/>
            <person name="Klotz M.G."/>
            <person name="Larimer F.W."/>
            <person name="Norton J.M."/>
            <person name="Op den Camp H.J.M."/>
            <person name="Shin M."/>
            <person name="Wei X."/>
        </authorList>
    </citation>
    <scope>NUCLEOTIDE SEQUENCE [LARGE SCALE GENOMIC DNA]</scope>
    <source>
        <strain>DSM 101675 / C91 / Nm57</strain>
    </source>
</reference>
<evidence type="ECO:0000255" key="1">
    <source>
        <dbReference type="HAMAP-Rule" id="MF_00188"/>
    </source>
</evidence>
<feature type="chain" id="PRO_1000020898" description="Protease HtpX homolog">
    <location>
        <begin position="1"/>
        <end position="292"/>
    </location>
</feature>
<feature type="transmembrane region" description="Helical" evidence="1">
    <location>
        <begin position="4"/>
        <end position="24"/>
    </location>
</feature>
<feature type="transmembrane region" description="Helical" evidence="1">
    <location>
        <begin position="42"/>
        <end position="62"/>
    </location>
</feature>
<feature type="transmembrane region" description="Helical" evidence="1">
    <location>
        <begin position="158"/>
        <end position="178"/>
    </location>
</feature>
<feature type="transmembrane region" description="Helical" evidence="1">
    <location>
        <begin position="198"/>
        <end position="218"/>
    </location>
</feature>
<feature type="active site" evidence="1">
    <location>
        <position position="148"/>
    </location>
</feature>
<feature type="binding site" evidence="1">
    <location>
        <position position="147"/>
    </location>
    <ligand>
        <name>Zn(2+)</name>
        <dbReference type="ChEBI" id="CHEBI:29105"/>
        <note>catalytic</note>
    </ligand>
</feature>
<feature type="binding site" evidence="1">
    <location>
        <position position="151"/>
    </location>
    <ligand>
        <name>Zn(2+)</name>
        <dbReference type="ChEBI" id="CHEBI:29105"/>
        <note>catalytic</note>
    </ligand>
</feature>
<feature type="binding site" evidence="1">
    <location>
        <position position="224"/>
    </location>
    <ligand>
        <name>Zn(2+)</name>
        <dbReference type="ChEBI" id="CHEBI:29105"/>
        <note>catalytic</note>
    </ligand>
</feature>
<dbReference type="EC" id="3.4.24.-" evidence="1"/>
<dbReference type="EMBL" id="CP000450">
    <property type="protein sequence ID" value="ABI59779.1"/>
    <property type="molecule type" value="Genomic_DNA"/>
</dbReference>
<dbReference type="RefSeq" id="WP_011634585.1">
    <property type="nucleotide sequence ID" value="NC_008344.1"/>
</dbReference>
<dbReference type="SMR" id="Q0AFV3"/>
<dbReference type="STRING" id="335283.Neut_1535"/>
<dbReference type="MEROPS" id="M48.002"/>
<dbReference type="KEGG" id="net:Neut_1535"/>
<dbReference type="eggNOG" id="COG0501">
    <property type="taxonomic scope" value="Bacteria"/>
</dbReference>
<dbReference type="HOGENOM" id="CLU_042266_1_0_4"/>
<dbReference type="OrthoDB" id="15218at2"/>
<dbReference type="Proteomes" id="UP000001966">
    <property type="component" value="Chromosome"/>
</dbReference>
<dbReference type="GO" id="GO:0005886">
    <property type="term" value="C:plasma membrane"/>
    <property type="evidence" value="ECO:0007669"/>
    <property type="project" value="UniProtKB-SubCell"/>
</dbReference>
<dbReference type="GO" id="GO:0004222">
    <property type="term" value="F:metalloendopeptidase activity"/>
    <property type="evidence" value="ECO:0007669"/>
    <property type="project" value="UniProtKB-UniRule"/>
</dbReference>
<dbReference type="GO" id="GO:0008270">
    <property type="term" value="F:zinc ion binding"/>
    <property type="evidence" value="ECO:0007669"/>
    <property type="project" value="UniProtKB-UniRule"/>
</dbReference>
<dbReference type="GO" id="GO:0006508">
    <property type="term" value="P:proteolysis"/>
    <property type="evidence" value="ECO:0007669"/>
    <property type="project" value="UniProtKB-KW"/>
</dbReference>
<dbReference type="CDD" id="cd07335">
    <property type="entry name" value="M48B_HtpX_like"/>
    <property type="match status" value="1"/>
</dbReference>
<dbReference type="Gene3D" id="3.30.2010.10">
    <property type="entry name" value="Metalloproteases ('zincins'), catalytic domain"/>
    <property type="match status" value="1"/>
</dbReference>
<dbReference type="HAMAP" id="MF_00188">
    <property type="entry name" value="Pept_M48_protease_HtpX"/>
    <property type="match status" value="1"/>
</dbReference>
<dbReference type="InterPro" id="IPR050083">
    <property type="entry name" value="HtpX_protease"/>
</dbReference>
<dbReference type="InterPro" id="IPR022919">
    <property type="entry name" value="Pept_M48_protease_HtpX"/>
</dbReference>
<dbReference type="InterPro" id="IPR001915">
    <property type="entry name" value="Peptidase_M48"/>
</dbReference>
<dbReference type="NCBIfam" id="NF003965">
    <property type="entry name" value="PRK05457.1"/>
    <property type="match status" value="1"/>
</dbReference>
<dbReference type="PANTHER" id="PTHR43221">
    <property type="entry name" value="PROTEASE HTPX"/>
    <property type="match status" value="1"/>
</dbReference>
<dbReference type="PANTHER" id="PTHR43221:SF1">
    <property type="entry name" value="PROTEASE HTPX"/>
    <property type="match status" value="1"/>
</dbReference>
<dbReference type="Pfam" id="PF01435">
    <property type="entry name" value="Peptidase_M48"/>
    <property type="match status" value="1"/>
</dbReference>
<proteinExistence type="inferred from homology"/>
<organism>
    <name type="scientific">Nitrosomonas eutropha (strain DSM 101675 / C91 / Nm57)</name>
    <dbReference type="NCBI Taxonomy" id="335283"/>
    <lineage>
        <taxon>Bacteria</taxon>
        <taxon>Pseudomonadati</taxon>
        <taxon>Pseudomonadota</taxon>
        <taxon>Betaproteobacteria</taxon>
        <taxon>Nitrosomonadales</taxon>
        <taxon>Nitrosomonadaceae</taxon>
        <taxon>Nitrosomonas</taxon>
    </lineage>
</organism>
<keyword id="KW-0997">Cell inner membrane</keyword>
<keyword id="KW-1003">Cell membrane</keyword>
<keyword id="KW-0378">Hydrolase</keyword>
<keyword id="KW-0472">Membrane</keyword>
<keyword id="KW-0479">Metal-binding</keyword>
<keyword id="KW-0482">Metalloprotease</keyword>
<keyword id="KW-0645">Protease</keyword>
<keyword id="KW-0812">Transmembrane</keyword>
<keyword id="KW-1133">Transmembrane helix</keyword>
<keyword id="KW-0862">Zinc</keyword>